<reference key="1">
    <citation type="journal article" date="1990" name="Plant Mol. Biol.">
        <title>Nucleotide sequence encoding a slow allele of Adh1 in pearl millet.</title>
        <authorList>
            <person name="Ha D.B.D."/>
            <person name="Buffard D."/>
            <person name="Berger F."/>
            <person name="Breda C."/>
            <person name="Esnault R."/>
        </authorList>
    </citation>
    <scope>NUCLEOTIDE SEQUENCE [MRNA]</scope>
    <source>
        <strain>cv. Massue</strain>
        <tissue>Root</tissue>
    </source>
</reference>
<feature type="chain" id="PRO_0000160710" description="Alcohol dehydrogenase 1">
    <location>
        <begin position="1"/>
        <end position="379"/>
    </location>
</feature>
<feature type="binding site" evidence="2">
    <location>
        <position position="47"/>
    </location>
    <ligand>
        <name>Zn(2+)</name>
        <dbReference type="ChEBI" id="CHEBI:29105"/>
        <label>1</label>
        <note>catalytic</note>
    </ligand>
</feature>
<feature type="binding site" evidence="2">
    <location>
        <position position="49"/>
    </location>
    <ligand>
        <name>an alcohol</name>
        <dbReference type="ChEBI" id="CHEBI:30879"/>
    </ligand>
</feature>
<feature type="binding site" evidence="2">
    <location>
        <position position="49"/>
    </location>
    <ligand>
        <name>NAD(+)</name>
        <dbReference type="ChEBI" id="CHEBI:57540"/>
    </ligand>
</feature>
<feature type="binding site" evidence="2">
    <location>
        <position position="49"/>
    </location>
    <ligand>
        <name>Zn(2+)</name>
        <dbReference type="ChEBI" id="CHEBI:29105"/>
        <label>1</label>
        <note>catalytic</note>
    </ligand>
</feature>
<feature type="binding site" evidence="1">
    <location>
        <position position="69"/>
    </location>
    <ligand>
        <name>an alcohol</name>
        <dbReference type="ChEBI" id="CHEBI:30879"/>
    </ligand>
</feature>
<feature type="binding site" evidence="2">
    <location>
        <position position="69"/>
    </location>
    <ligand>
        <name>Zn(2+)</name>
        <dbReference type="ChEBI" id="CHEBI:29105"/>
        <label>1</label>
        <note>catalytic</note>
    </ligand>
</feature>
<feature type="binding site" evidence="2">
    <location>
        <position position="99"/>
    </location>
    <ligand>
        <name>Zn(2+)</name>
        <dbReference type="ChEBI" id="CHEBI:29105"/>
        <label>2</label>
    </ligand>
</feature>
<feature type="binding site" evidence="2">
    <location>
        <position position="102"/>
    </location>
    <ligand>
        <name>Zn(2+)</name>
        <dbReference type="ChEBI" id="CHEBI:29105"/>
        <label>2</label>
    </ligand>
</feature>
<feature type="binding site" evidence="2">
    <location>
        <position position="105"/>
    </location>
    <ligand>
        <name>Zn(2+)</name>
        <dbReference type="ChEBI" id="CHEBI:29105"/>
        <label>2</label>
    </ligand>
</feature>
<feature type="binding site" evidence="2">
    <location>
        <position position="113"/>
    </location>
    <ligand>
        <name>Zn(2+)</name>
        <dbReference type="ChEBI" id="CHEBI:29105"/>
        <label>2</label>
    </ligand>
</feature>
<feature type="binding site" evidence="2">
    <location>
        <position position="177"/>
    </location>
    <ligand>
        <name>Zn(2+)</name>
        <dbReference type="ChEBI" id="CHEBI:29105"/>
        <label>1</label>
        <note>catalytic</note>
    </ligand>
</feature>
<feature type="binding site" evidence="2">
    <location>
        <begin position="202"/>
        <end position="207"/>
    </location>
    <ligand>
        <name>NAD(+)</name>
        <dbReference type="ChEBI" id="CHEBI:57540"/>
    </ligand>
</feature>
<feature type="binding site" evidence="2">
    <location>
        <position position="226"/>
    </location>
    <ligand>
        <name>NAD(+)</name>
        <dbReference type="ChEBI" id="CHEBI:57540"/>
    </ligand>
</feature>
<feature type="binding site" evidence="2">
    <location>
        <position position="231"/>
    </location>
    <ligand>
        <name>NAD(+)</name>
        <dbReference type="ChEBI" id="CHEBI:57540"/>
    </ligand>
</feature>
<feature type="binding site" evidence="2">
    <location>
        <position position="272"/>
    </location>
    <ligand>
        <name>NAD(+)</name>
        <dbReference type="ChEBI" id="CHEBI:57540"/>
    </ligand>
</feature>
<feature type="binding site" evidence="1">
    <location>
        <begin position="295"/>
        <end position="297"/>
    </location>
    <ligand>
        <name>NAD(+)</name>
        <dbReference type="ChEBI" id="CHEBI:57540"/>
    </ligand>
</feature>
<feature type="binding site" evidence="2">
    <location>
        <position position="295"/>
    </location>
    <ligand>
        <name>NAD(+)</name>
        <dbReference type="ChEBI" id="CHEBI:57540"/>
    </ligand>
</feature>
<feature type="binding site" evidence="2">
    <location>
        <position position="322"/>
    </location>
    <ligand>
        <name>NAD(+)</name>
        <dbReference type="ChEBI" id="CHEBI:57540"/>
    </ligand>
</feature>
<feature type="binding site" evidence="2">
    <location>
        <position position="372"/>
    </location>
    <ligand>
        <name>NAD(+)</name>
        <dbReference type="ChEBI" id="CHEBI:57540"/>
    </ligand>
</feature>
<dbReference type="EC" id="1.1.1.1" evidence="2"/>
<dbReference type="EMBL" id="X16547">
    <property type="protein sequence ID" value="CAA34547.1"/>
    <property type="molecule type" value="mRNA"/>
</dbReference>
<dbReference type="PIR" id="S14905">
    <property type="entry name" value="DEILSP"/>
</dbReference>
<dbReference type="SMR" id="P14219"/>
<dbReference type="GO" id="GO:0005829">
    <property type="term" value="C:cytosol"/>
    <property type="evidence" value="ECO:0007669"/>
    <property type="project" value="TreeGrafter"/>
</dbReference>
<dbReference type="GO" id="GO:0004022">
    <property type="term" value="F:alcohol dehydrogenase (NAD+) activity"/>
    <property type="evidence" value="ECO:0007669"/>
    <property type="project" value="UniProtKB-EC"/>
</dbReference>
<dbReference type="GO" id="GO:0051903">
    <property type="term" value="F:S-(hydroxymethyl)glutathione dehydrogenase [NAD(P)+] activity"/>
    <property type="evidence" value="ECO:0007669"/>
    <property type="project" value="TreeGrafter"/>
</dbReference>
<dbReference type="GO" id="GO:0008270">
    <property type="term" value="F:zinc ion binding"/>
    <property type="evidence" value="ECO:0007669"/>
    <property type="project" value="InterPro"/>
</dbReference>
<dbReference type="GO" id="GO:0046294">
    <property type="term" value="P:formaldehyde catabolic process"/>
    <property type="evidence" value="ECO:0007669"/>
    <property type="project" value="TreeGrafter"/>
</dbReference>
<dbReference type="CDD" id="cd08301">
    <property type="entry name" value="alcohol_DH_plants"/>
    <property type="match status" value="1"/>
</dbReference>
<dbReference type="FunFam" id="3.90.180.10:FF:000067">
    <property type="entry name" value="alcohol dehydrogenase 1-like isoform X1"/>
    <property type="match status" value="1"/>
</dbReference>
<dbReference type="FunFam" id="3.40.50.720:FF:001292">
    <property type="entry name" value="Alcohol dehydrogenase class-P"/>
    <property type="match status" value="1"/>
</dbReference>
<dbReference type="Gene3D" id="3.90.180.10">
    <property type="entry name" value="Medium-chain alcohol dehydrogenases, catalytic domain"/>
    <property type="match status" value="1"/>
</dbReference>
<dbReference type="Gene3D" id="3.40.50.720">
    <property type="entry name" value="NAD(P)-binding Rossmann-like Domain"/>
    <property type="match status" value="1"/>
</dbReference>
<dbReference type="InterPro" id="IPR013149">
    <property type="entry name" value="ADH-like_C"/>
</dbReference>
<dbReference type="InterPro" id="IPR013154">
    <property type="entry name" value="ADH-like_N"/>
</dbReference>
<dbReference type="InterPro" id="IPR002328">
    <property type="entry name" value="ADH_Zn_CS"/>
</dbReference>
<dbReference type="InterPro" id="IPR011032">
    <property type="entry name" value="GroES-like_sf"/>
</dbReference>
<dbReference type="InterPro" id="IPR036291">
    <property type="entry name" value="NAD(P)-bd_dom_sf"/>
</dbReference>
<dbReference type="PANTHER" id="PTHR43880">
    <property type="entry name" value="ALCOHOL DEHYDROGENASE"/>
    <property type="match status" value="1"/>
</dbReference>
<dbReference type="PANTHER" id="PTHR43880:SF9">
    <property type="entry name" value="ALCOHOL DEHYDROGENASE 1"/>
    <property type="match status" value="1"/>
</dbReference>
<dbReference type="Pfam" id="PF08240">
    <property type="entry name" value="ADH_N"/>
    <property type="match status" value="1"/>
</dbReference>
<dbReference type="Pfam" id="PF00107">
    <property type="entry name" value="ADH_zinc_N"/>
    <property type="match status" value="1"/>
</dbReference>
<dbReference type="SUPFAM" id="SSF50129">
    <property type="entry name" value="GroES-like"/>
    <property type="match status" value="2"/>
</dbReference>
<dbReference type="SUPFAM" id="SSF51735">
    <property type="entry name" value="NAD(P)-binding Rossmann-fold domains"/>
    <property type="match status" value="1"/>
</dbReference>
<dbReference type="PROSITE" id="PS00059">
    <property type="entry name" value="ADH_ZINC"/>
    <property type="match status" value="1"/>
</dbReference>
<keyword id="KW-0963">Cytoplasm</keyword>
<keyword id="KW-0479">Metal-binding</keyword>
<keyword id="KW-0520">NAD</keyword>
<keyword id="KW-0560">Oxidoreductase</keyword>
<keyword id="KW-0862">Zinc</keyword>
<proteinExistence type="evidence at transcript level"/>
<evidence type="ECO:0000250" key="1">
    <source>
        <dbReference type="UniProtKB" id="P00327"/>
    </source>
</evidence>
<evidence type="ECO:0000250" key="2">
    <source>
        <dbReference type="UniProtKB" id="P06525"/>
    </source>
</evidence>
<evidence type="ECO:0000305" key="3"/>
<organism>
    <name type="scientific">Cenchrus americanus</name>
    <name type="common">Pearl millet</name>
    <name type="synonym">Pennisetum glaucum</name>
    <dbReference type="NCBI Taxonomy" id="4543"/>
    <lineage>
        <taxon>Eukaryota</taxon>
        <taxon>Viridiplantae</taxon>
        <taxon>Streptophyta</taxon>
        <taxon>Embryophyta</taxon>
        <taxon>Tracheophyta</taxon>
        <taxon>Spermatophyta</taxon>
        <taxon>Magnoliopsida</taxon>
        <taxon>Liliopsida</taxon>
        <taxon>Poales</taxon>
        <taxon>Poaceae</taxon>
        <taxon>PACMAD clade</taxon>
        <taxon>Panicoideae</taxon>
        <taxon>Panicodae</taxon>
        <taxon>Paniceae</taxon>
        <taxon>Cenchrinae</taxon>
        <taxon>Cenchrus</taxon>
    </lineage>
</organism>
<accession>P14219</accession>
<name>ADH1_CENAM</name>
<protein>
    <recommendedName>
        <fullName>Alcohol dehydrogenase 1</fullName>
        <ecNumber evidence="2">1.1.1.1</ecNumber>
    </recommendedName>
    <alternativeName>
        <fullName>ADH slow-allele</fullName>
    </alternativeName>
</protein>
<gene>
    <name type="primary">ADH1</name>
</gene>
<comment type="catalytic activity">
    <reaction evidence="2">
        <text>a primary alcohol + NAD(+) = an aldehyde + NADH + H(+)</text>
        <dbReference type="Rhea" id="RHEA:10736"/>
        <dbReference type="ChEBI" id="CHEBI:15378"/>
        <dbReference type="ChEBI" id="CHEBI:15734"/>
        <dbReference type="ChEBI" id="CHEBI:17478"/>
        <dbReference type="ChEBI" id="CHEBI:57540"/>
        <dbReference type="ChEBI" id="CHEBI:57945"/>
        <dbReference type="EC" id="1.1.1.1"/>
    </reaction>
</comment>
<comment type="catalytic activity">
    <reaction evidence="2">
        <text>a secondary alcohol + NAD(+) = a ketone + NADH + H(+)</text>
        <dbReference type="Rhea" id="RHEA:10740"/>
        <dbReference type="ChEBI" id="CHEBI:15378"/>
        <dbReference type="ChEBI" id="CHEBI:17087"/>
        <dbReference type="ChEBI" id="CHEBI:35681"/>
        <dbReference type="ChEBI" id="CHEBI:57540"/>
        <dbReference type="ChEBI" id="CHEBI:57945"/>
        <dbReference type="EC" id="1.1.1.1"/>
    </reaction>
</comment>
<comment type="cofactor">
    <cofactor evidence="2">
        <name>Zn(2+)</name>
        <dbReference type="ChEBI" id="CHEBI:29105"/>
    </cofactor>
    <text evidence="2">Binds 2 Zn(2+) ions per subunit.</text>
</comment>
<comment type="subunit">
    <text evidence="2">Homodimer.</text>
</comment>
<comment type="subcellular location">
    <subcellularLocation>
        <location evidence="2">Cytoplasm</location>
    </subcellularLocation>
</comment>
<comment type="similarity">
    <text evidence="3">Belongs to the zinc-containing alcohol dehydrogenase family.</text>
</comment>
<sequence>MATAGKVIKCKAAVAWEAGKPLSIEEVEVAPPQAMEVRVKILYTSLCHTDVYFWEAKGQTPVFPRIFGHEAGGIIESVGEGVTDVAPGDHVLPVFTGECKECPHCKSAESNMCDLLRINTVRGVMIGDGKSRFSINGKPIYHFVGTSTFSEYTVMHVGCVAKINPEAPLDKVCVLSCGISTGLGASINVAKPPKGSTVAIFGLGAVGLAAAEGARIAGASRIIGVDLNPSRFEEAKKFGCTEFVNPKDHNKPVQEVLADMTNGGVDRSVECTGNINAMIQAFECVHDGWGVAVLVGVPHKDAEFKTHPMNFLNERTLKGTFFGNFKPRTDLPNVVELYMKKELEVEKFITHSVPFSEINKAFDLMAKGEGIRCIIRMEN</sequence>